<feature type="chain" id="PRO_1000136948" description="Cell division protein ZapD">
    <location>
        <begin position="1"/>
        <end position="247"/>
    </location>
</feature>
<name>ZAPD_SALA4</name>
<accession>B5F7X6</accession>
<evidence type="ECO:0000255" key="1">
    <source>
        <dbReference type="HAMAP-Rule" id="MF_01092"/>
    </source>
</evidence>
<reference key="1">
    <citation type="journal article" date="2011" name="J. Bacteriol.">
        <title>Comparative genomics of 28 Salmonella enterica isolates: evidence for CRISPR-mediated adaptive sublineage evolution.</title>
        <authorList>
            <person name="Fricke W.F."/>
            <person name="Mammel M.K."/>
            <person name="McDermott P.F."/>
            <person name="Tartera C."/>
            <person name="White D.G."/>
            <person name="Leclerc J.E."/>
            <person name="Ravel J."/>
            <person name="Cebula T.A."/>
        </authorList>
    </citation>
    <scope>NUCLEOTIDE SEQUENCE [LARGE SCALE GENOMIC DNA]</scope>
    <source>
        <strain>SL483</strain>
    </source>
</reference>
<organism>
    <name type="scientific">Salmonella agona (strain SL483)</name>
    <dbReference type="NCBI Taxonomy" id="454166"/>
    <lineage>
        <taxon>Bacteria</taxon>
        <taxon>Pseudomonadati</taxon>
        <taxon>Pseudomonadota</taxon>
        <taxon>Gammaproteobacteria</taxon>
        <taxon>Enterobacterales</taxon>
        <taxon>Enterobacteriaceae</taxon>
        <taxon>Salmonella</taxon>
    </lineage>
</organism>
<protein>
    <recommendedName>
        <fullName evidence="1">Cell division protein ZapD</fullName>
    </recommendedName>
    <alternativeName>
        <fullName evidence="1">Z ring-associated protein D</fullName>
    </alternativeName>
</protein>
<dbReference type="EMBL" id="CP001138">
    <property type="protein sequence ID" value="ACH48689.1"/>
    <property type="molecule type" value="Genomic_DNA"/>
</dbReference>
<dbReference type="RefSeq" id="WP_000557440.1">
    <property type="nucleotide sequence ID" value="NC_011149.1"/>
</dbReference>
<dbReference type="SMR" id="B5F7X6"/>
<dbReference type="KEGG" id="sea:SeAg_B0158"/>
<dbReference type="HOGENOM" id="CLU_076303_0_0_6"/>
<dbReference type="Proteomes" id="UP000008819">
    <property type="component" value="Chromosome"/>
</dbReference>
<dbReference type="GO" id="GO:0032153">
    <property type="term" value="C:cell division site"/>
    <property type="evidence" value="ECO:0007669"/>
    <property type="project" value="TreeGrafter"/>
</dbReference>
<dbReference type="GO" id="GO:0005737">
    <property type="term" value="C:cytoplasm"/>
    <property type="evidence" value="ECO:0007669"/>
    <property type="project" value="UniProtKB-SubCell"/>
</dbReference>
<dbReference type="GO" id="GO:0000917">
    <property type="term" value="P:division septum assembly"/>
    <property type="evidence" value="ECO:0007669"/>
    <property type="project" value="UniProtKB-KW"/>
</dbReference>
<dbReference type="GO" id="GO:0043093">
    <property type="term" value="P:FtsZ-dependent cytokinesis"/>
    <property type="evidence" value="ECO:0007669"/>
    <property type="project" value="UniProtKB-UniRule"/>
</dbReference>
<dbReference type="FunFam" id="1.10.3900.10:FF:000001">
    <property type="entry name" value="Cell division protein ZapD"/>
    <property type="match status" value="1"/>
</dbReference>
<dbReference type="FunFam" id="2.60.440.10:FF:000001">
    <property type="entry name" value="Cell division protein ZapD"/>
    <property type="match status" value="1"/>
</dbReference>
<dbReference type="Gene3D" id="1.10.3900.10">
    <property type="entry name" value="YacF-like"/>
    <property type="match status" value="1"/>
</dbReference>
<dbReference type="Gene3D" id="2.60.440.10">
    <property type="entry name" value="YacF-like domains"/>
    <property type="match status" value="1"/>
</dbReference>
<dbReference type="HAMAP" id="MF_01092">
    <property type="entry name" value="ZapD"/>
    <property type="match status" value="1"/>
</dbReference>
<dbReference type="InterPro" id="IPR009777">
    <property type="entry name" value="ZapD"/>
</dbReference>
<dbReference type="InterPro" id="IPR027462">
    <property type="entry name" value="ZapD_C"/>
</dbReference>
<dbReference type="InterPro" id="IPR036268">
    <property type="entry name" value="ZapD_sf"/>
</dbReference>
<dbReference type="NCBIfam" id="NF003653">
    <property type="entry name" value="PRK05287.1-1"/>
    <property type="match status" value="1"/>
</dbReference>
<dbReference type="NCBIfam" id="NF003655">
    <property type="entry name" value="PRK05287.1-3"/>
    <property type="match status" value="1"/>
</dbReference>
<dbReference type="PANTHER" id="PTHR39455">
    <property type="entry name" value="CELL DIVISION PROTEIN ZAPD"/>
    <property type="match status" value="1"/>
</dbReference>
<dbReference type="PANTHER" id="PTHR39455:SF1">
    <property type="entry name" value="CELL DIVISION PROTEIN ZAPD"/>
    <property type="match status" value="1"/>
</dbReference>
<dbReference type="Pfam" id="PF07072">
    <property type="entry name" value="ZapD"/>
    <property type="match status" value="1"/>
</dbReference>
<dbReference type="SUPFAM" id="SSF160950">
    <property type="entry name" value="YacF-like"/>
    <property type="match status" value="1"/>
</dbReference>
<gene>
    <name evidence="1" type="primary">zapD</name>
    <name type="ordered locus">SeAg_B0158</name>
</gene>
<comment type="function">
    <text evidence="1">Cell division factor that enhances FtsZ-ring assembly. Directly interacts with FtsZ and promotes bundling of FtsZ protofilaments, with a reduction in FtsZ GTPase activity.</text>
</comment>
<comment type="subunit">
    <text evidence="1">Interacts with FtsZ.</text>
</comment>
<comment type="subcellular location">
    <subcellularLocation>
        <location evidence="1">Cytoplasm</location>
    </subcellularLocation>
    <text evidence="1">Localizes to mid-cell in an FtsZ-dependent manner.</text>
</comment>
<comment type="similarity">
    <text evidence="1">Belongs to the ZapD family.</text>
</comment>
<keyword id="KW-0131">Cell cycle</keyword>
<keyword id="KW-0132">Cell division</keyword>
<keyword id="KW-0963">Cytoplasm</keyword>
<keyword id="KW-0717">Septation</keyword>
<proteinExistence type="inferred from homology"/>
<sequence length="247" mass="28456">MHTQVLFEHPLNEKMRTWLRIEFLIQQLSINLPIADHAGALHFFRNISDLLDVFERGEVRTELLKELERQQRKLQAWVEVPGVDQDRIEALRQQLKSAGSVLISAPRIGQQLREDRLIALVRQRLSIPGGCCSFDLPTLHIWLHLQQAQRDAQIESWLASLNPLTQALTLVLDLIRNSAPFRKQTSLNGFYQDNGDDADLLRLMLMLDSQLYPQISGHKSRFAIRFMPLDSENGLVPERLDFELACC</sequence>